<sequence>MEPSQCVEELEDDVFQPEDGEPVTQPGSLLSADLFAQSLLDCPLSRLQLFPLTHCCGPGLRPTSQEDKATQTLSPASPSQGVMLPCGVTEEPQRLFYGNAGYRLPLPASFPAVLPIGEQPPEGQWQHQAEVQIARKLQCIADQFHRLHVQQHQQNQNRVWWQILLFLHNLALNGEENRNGAGPR</sequence>
<evidence type="ECO:0000250" key="1"/>
<evidence type="ECO:0000269" key="2">
    <source>
    </source>
</evidence>
<evidence type="ECO:0000303" key="3">
    <source>
    </source>
</evidence>
<evidence type="ECO:0000305" key="4"/>
<evidence type="ECO:0007829" key="5">
    <source>
        <dbReference type="PDB" id="7CNU"/>
    </source>
</evidence>
<evidence type="ECO:0007829" key="6">
    <source>
        <dbReference type="PDB" id="8IQK"/>
    </source>
</evidence>
<dbReference type="EMBL" id="AY029254">
    <property type="protein sequence ID" value="AAK38748.1"/>
    <property type="molecule type" value="mRNA"/>
</dbReference>
<dbReference type="EMBL" id="AY222040">
    <property type="protein sequence ID" value="AAP22965.1"/>
    <property type="molecule type" value="mRNA"/>
</dbReference>
<dbReference type="EMBL" id="AY222041">
    <property type="protein sequence ID" value="AAP22966.1"/>
    <property type="molecule type" value="mRNA"/>
</dbReference>
<dbReference type="EMBL" id="AK024472">
    <property type="protein sequence ID" value="BAB15762.1"/>
    <property type="status" value="ALT_INIT"/>
    <property type="molecule type" value="mRNA"/>
</dbReference>
<dbReference type="EMBL" id="BC060783">
    <property type="protein sequence ID" value="AAH60783.1"/>
    <property type="status" value="ALT_INIT"/>
    <property type="molecule type" value="mRNA"/>
</dbReference>
<dbReference type="EMBL" id="BC069328">
    <property type="protein sequence ID" value="AAH69328.1"/>
    <property type="molecule type" value="mRNA"/>
</dbReference>
<dbReference type="EMBL" id="BC069505">
    <property type="protein sequence ID" value="AAH69505.1"/>
    <property type="molecule type" value="mRNA"/>
</dbReference>
<dbReference type="EMBL" id="BC070043">
    <property type="protein sequence ID" value="AAH70043.2"/>
    <property type="molecule type" value="mRNA"/>
</dbReference>
<dbReference type="EMBL" id="BC104983">
    <property type="protein sequence ID" value="AAI04984.1"/>
    <property type="molecule type" value="mRNA"/>
</dbReference>
<dbReference type="EMBL" id="BC104985">
    <property type="protein sequence ID" value="AAI04986.1"/>
    <property type="molecule type" value="mRNA"/>
</dbReference>
<dbReference type="CCDS" id="CCDS10052.1">
    <molecule id="Q96LC9-1"/>
</dbReference>
<dbReference type="CCDS" id="CCDS32196.1">
    <molecule id="Q96LC9-3"/>
</dbReference>
<dbReference type="CCDS" id="CCDS45223.1">
    <molecule id="Q96LC9-2"/>
</dbReference>
<dbReference type="RefSeq" id="NP_001003940.1">
    <molecule id="Q96LC9-1"/>
    <property type="nucleotide sequence ID" value="NM_001003940.2"/>
</dbReference>
<dbReference type="RefSeq" id="NP_001003942.1">
    <molecule id="Q96LC9-2"/>
    <property type="nucleotide sequence ID" value="NM_001003942.2"/>
</dbReference>
<dbReference type="RefSeq" id="NP_001003943.1">
    <molecule id="Q96LC9-3"/>
    <property type="nucleotide sequence ID" value="NM_001003943.3"/>
</dbReference>
<dbReference type="RefSeq" id="NP_001385424.1">
    <molecule id="Q96LC9-1"/>
    <property type="nucleotide sequence ID" value="NM_001398495.1"/>
</dbReference>
<dbReference type="RefSeq" id="NP_001385425.1">
    <molecule id="Q96LC9-1"/>
    <property type="nucleotide sequence ID" value="NM_001398496.1"/>
</dbReference>
<dbReference type="RefSeq" id="NP_001385426.1">
    <molecule id="Q96LC9-1"/>
    <property type="nucleotide sequence ID" value="NM_001398497.1"/>
</dbReference>
<dbReference type="RefSeq" id="NP_001385427.1">
    <molecule id="Q96LC9-1"/>
    <property type="nucleotide sequence ID" value="NM_001398498.1"/>
</dbReference>
<dbReference type="RefSeq" id="NP_001385428.1">
    <molecule id="Q96LC9-1"/>
    <property type="nucleotide sequence ID" value="NM_001398499.1"/>
</dbReference>
<dbReference type="RefSeq" id="NP_001385429.1">
    <molecule id="Q96LC9-1"/>
    <property type="nucleotide sequence ID" value="NM_001398500.1"/>
</dbReference>
<dbReference type="RefSeq" id="NP_001385430.1">
    <molecule id="Q96LC9-1"/>
    <property type="nucleotide sequence ID" value="NM_001398501.1"/>
</dbReference>
<dbReference type="RefSeq" id="NP_001385431.1">
    <molecule id="Q96LC9-1"/>
    <property type="nucleotide sequence ID" value="NM_001398502.1"/>
</dbReference>
<dbReference type="RefSeq" id="NP_001385432.1">
    <molecule id="Q96LC9-1"/>
    <property type="nucleotide sequence ID" value="NM_001398503.1"/>
</dbReference>
<dbReference type="RefSeq" id="NP_001385433.1">
    <molecule id="Q96LC9-1"/>
    <property type="nucleotide sequence ID" value="NM_001398504.1"/>
</dbReference>
<dbReference type="RefSeq" id="NP_001385434.1">
    <molecule id="Q96LC9-1"/>
    <property type="nucleotide sequence ID" value="NM_001398505.1"/>
</dbReference>
<dbReference type="RefSeq" id="NP_001385435.1">
    <molecule id="Q96LC9-1"/>
    <property type="nucleotide sequence ID" value="NM_001398506.1"/>
</dbReference>
<dbReference type="RefSeq" id="NP_001385436.1">
    <molecule id="Q96LC9-1"/>
    <property type="nucleotide sequence ID" value="NM_001398507.1"/>
</dbReference>
<dbReference type="RefSeq" id="NP_001385437.1">
    <molecule id="Q96LC9-3"/>
    <property type="nucleotide sequence ID" value="NM_001398508.1"/>
</dbReference>
<dbReference type="RefSeq" id="NP_001385438.1">
    <molecule id="Q96LC9-3"/>
    <property type="nucleotide sequence ID" value="NM_001398509.1"/>
</dbReference>
<dbReference type="RefSeq" id="NP_001385439.1">
    <molecule id="Q96LC9-3"/>
    <property type="nucleotide sequence ID" value="NM_001398510.1"/>
</dbReference>
<dbReference type="RefSeq" id="NP_277038.1">
    <molecule id="Q96LC9-1"/>
    <property type="nucleotide sequence ID" value="NM_033503.4"/>
</dbReference>
<dbReference type="PDB" id="7CNU">
    <property type="method" value="X-ray"/>
    <property type="resolution" value="2.00 A"/>
    <property type="chains" value="C=63-82"/>
</dbReference>
<dbReference type="PDB" id="8IQK">
    <property type="method" value="X-ray"/>
    <property type="resolution" value="2.88 A"/>
    <property type="chains" value="B/D/F/H=127-151"/>
</dbReference>
<dbReference type="PDB" id="8IQL">
    <property type="method" value="X-ray"/>
    <property type="resolution" value="2.96 A"/>
    <property type="chains" value="B/D=127-151"/>
</dbReference>
<dbReference type="PDB" id="8IQM">
    <property type="method" value="X-ray"/>
    <property type="resolution" value="1.97 A"/>
    <property type="chains" value="B=130-150"/>
</dbReference>
<dbReference type="PDB" id="8R58">
    <property type="method" value="X-ray"/>
    <property type="resolution" value="2.31 A"/>
    <property type="chains" value="B=1-19"/>
</dbReference>
<dbReference type="PDBsum" id="7CNU"/>
<dbReference type="PDBsum" id="8IQK"/>
<dbReference type="PDBsum" id="8IQL"/>
<dbReference type="PDBsum" id="8IQM"/>
<dbReference type="PDBsum" id="8R58"/>
<dbReference type="SMR" id="Q96LC9"/>
<dbReference type="BioGRID" id="124716">
    <property type="interactions" value="40"/>
</dbReference>
<dbReference type="FunCoup" id="Q96LC9">
    <property type="interactions" value="162"/>
</dbReference>
<dbReference type="IntAct" id="Q96LC9">
    <property type="interactions" value="27"/>
</dbReference>
<dbReference type="STRING" id="9606.ENSP00000346697"/>
<dbReference type="iPTMnet" id="Q96LC9"/>
<dbReference type="PhosphoSitePlus" id="Q96LC9"/>
<dbReference type="BioMuta" id="BMF"/>
<dbReference type="jPOST" id="Q96LC9"/>
<dbReference type="MassIVE" id="Q96LC9"/>
<dbReference type="PaxDb" id="9606-ENSP00000346697"/>
<dbReference type="PeptideAtlas" id="Q96LC9"/>
<dbReference type="ProteomicsDB" id="77201">
    <molecule id="Q96LC9-1"/>
</dbReference>
<dbReference type="ProteomicsDB" id="77202">
    <molecule id="Q96LC9-2"/>
</dbReference>
<dbReference type="ProteomicsDB" id="77203">
    <molecule id="Q96LC9-3"/>
</dbReference>
<dbReference type="Pumba" id="Q96LC9"/>
<dbReference type="Antibodypedia" id="1506">
    <property type="antibodies" value="475 antibodies from 39 providers"/>
</dbReference>
<dbReference type="DNASU" id="90427"/>
<dbReference type="Ensembl" id="ENST00000354670.9">
    <molecule id="Q96LC9-1"/>
    <property type="protein sequence ID" value="ENSP00000346697.4"/>
    <property type="gene ID" value="ENSG00000104081.14"/>
</dbReference>
<dbReference type="Ensembl" id="ENST00000397573.5">
    <molecule id="Q96LC9-1"/>
    <property type="protein sequence ID" value="ENSP00000380703.1"/>
    <property type="gene ID" value="ENSG00000104081.14"/>
</dbReference>
<dbReference type="Ensembl" id="ENST00000431415.3">
    <molecule id="Q96LC9-2"/>
    <property type="protein sequence ID" value="ENSP00000396511.3"/>
    <property type="gene ID" value="ENSG00000104081.14"/>
</dbReference>
<dbReference type="Ensembl" id="ENST00000558774.5">
    <molecule id="Q96LC9-3"/>
    <property type="protein sequence ID" value="ENSP00000453913.1"/>
    <property type="gene ID" value="ENSG00000104081.14"/>
</dbReference>
<dbReference type="Ensembl" id="ENST00000559701.5">
    <molecule id="Q96LC9-3"/>
    <property type="protein sequence ID" value="ENSP00000453919.1"/>
    <property type="gene ID" value="ENSG00000104081.14"/>
</dbReference>
<dbReference type="Ensembl" id="ENST00000561282.5">
    <molecule id="Q96LC9-1"/>
    <property type="protein sequence ID" value="ENSP00000453522.1"/>
    <property type="gene ID" value="ENSG00000104081.14"/>
</dbReference>
<dbReference type="Ensembl" id="ENST00000561360.5">
    <molecule id="Q96LC9-1"/>
    <property type="protein sequence ID" value="ENSP00000453892.1"/>
    <property type="gene ID" value="ENSG00000104081.14"/>
</dbReference>
<dbReference type="GeneID" id="90427"/>
<dbReference type="KEGG" id="hsa:90427"/>
<dbReference type="MANE-Select" id="ENST00000354670.9">
    <property type="protein sequence ID" value="ENSP00000346697.4"/>
    <property type="RefSeq nucleotide sequence ID" value="NM_001003940.2"/>
    <property type="RefSeq protein sequence ID" value="NP_001003940.1"/>
</dbReference>
<dbReference type="UCSC" id="uc001zkt.6">
    <molecule id="Q96LC9-1"/>
    <property type="organism name" value="human"/>
</dbReference>
<dbReference type="AGR" id="HGNC:24132"/>
<dbReference type="CTD" id="90427"/>
<dbReference type="DisGeNET" id="90427"/>
<dbReference type="GeneCards" id="BMF"/>
<dbReference type="HGNC" id="HGNC:24132">
    <property type="gene designation" value="BMF"/>
</dbReference>
<dbReference type="HPA" id="ENSG00000104081">
    <property type="expression patterns" value="Tissue enhanced (lymphoid)"/>
</dbReference>
<dbReference type="MalaCards" id="BMF"/>
<dbReference type="MIM" id="606266">
    <property type="type" value="gene"/>
</dbReference>
<dbReference type="neXtProt" id="NX_Q96LC9"/>
<dbReference type="OpenTargets" id="ENSG00000104081"/>
<dbReference type="PharmGKB" id="PA134893658"/>
<dbReference type="VEuPathDB" id="HostDB:ENSG00000104081"/>
<dbReference type="eggNOG" id="ENOG502S0P3">
    <property type="taxonomic scope" value="Eukaryota"/>
</dbReference>
<dbReference type="GeneTree" id="ENSGT00390000017896"/>
<dbReference type="HOGENOM" id="CLU_090680_0_0_1"/>
<dbReference type="InParanoid" id="Q96LC9"/>
<dbReference type="OMA" id="HAEQQDK"/>
<dbReference type="OrthoDB" id="9934797at2759"/>
<dbReference type="PAN-GO" id="Q96LC9">
    <property type="GO annotations" value="3 GO annotations based on evolutionary models"/>
</dbReference>
<dbReference type="PhylomeDB" id="Q96LC9"/>
<dbReference type="TreeFam" id="TF336039"/>
<dbReference type="PathwayCommons" id="Q96LC9"/>
<dbReference type="Reactome" id="R-HSA-111453">
    <property type="pathway name" value="BH3-only proteins associate with and inactivate anti-apoptotic BCL-2 members"/>
</dbReference>
<dbReference type="Reactome" id="R-HSA-139910">
    <property type="pathway name" value="Activation of BMF and translocation to mitochondria"/>
</dbReference>
<dbReference type="SignaLink" id="Q96LC9"/>
<dbReference type="SIGNOR" id="Q96LC9"/>
<dbReference type="BioGRID-ORCS" id="90427">
    <property type="hits" value="29 hits in 1152 CRISPR screens"/>
</dbReference>
<dbReference type="GeneWiki" id="BMF_(gene)"/>
<dbReference type="GenomeRNAi" id="90427"/>
<dbReference type="Pharos" id="Q96LC9">
    <property type="development level" value="Tbio"/>
</dbReference>
<dbReference type="PRO" id="PR:Q96LC9"/>
<dbReference type="Proteomes" id="UP000005640">
    <property type="component" value="Chromosome 15"/>
</dbReference>
<dbReference type="RNAct" id="Q96LC9">
    <property type="molecule type" value="protein"/>
</dbReference>
<dbReference type="Bgee" id="ENSG00000104081">
    <property type="expression patterns" value="Expressed in monocyte and 118 other cell types or tissues"/>
</dbReference>
<dbReference type="ExpressionAtlas" id="Q96LC9">
    <property type="expression patterns" value="baseline and differential"/>
</dbReference>
<dbReference type="GO" id="GO:0005829">
    <property type="term" value="C:cytosol"/>
    <property type="evidence" value="ECO:0000304"/>
    <property type="project" value="Reactome"/>
</dbReference>
<dbReference type="GO" id="GO:0005741">
    <property type="term" value="C:mitochondrial outer membrane"/>
    <property type="evidence" value="ECO:0000304"/>
    <property type="project" value="Reactome"/>
</dbReference>
<dbReference type="GO" id="GO:0016459">
    <property type="term" value="C:myosin complex"/>
    <property type="evidence" value="ECO:0000250"/>
    <property type="project" value="UniProtKB"/>
</dbReference>
<dbReference type="GO" id="GO:0005886">
    <property type="term" value="C:plasma membrane"/>
    <property type="evidence" value="ECO:0000304"/>
    <property type="project" value="Reactome"/>
</dbReference>
<dbReference type="GO" id="GO:0043276">
    <property type="term" value="P:anoikis"/>
    <property type="evidence" value="ECO:0000314"/>
    <property type="project" value="MGI"/>
</dbReference>
<dbReference type="GO" id="GO:0034644">
    <property type="term" value="P:cellular response to UV"/>
    <property type="evidence" value="ECO:0000314"/>
    <property type="project" value="CAFA"/>
</dbReference>
<dbReference type="GO" id="GO:0010507">
    <property type="term" value="P:negative regulation of autophagy"/>
    <property type="evidence" value="ECO:0000314"/>
    <property type="project" value="CAFA"/>
</dbReference>
<dbReference type="GO" id="GO:0043065">
    <property type="term" value="P:positive regulation of apoptotic process"/>
    <property type="evidence" value="ECO:0000315"/>
    <property type="project" value="BHF-UCL"/>
</dbReference>
<dbReference type="GO" id="GO:0031334">
    <property type="term" value="P:positive regulation of protein-containing complex assembly"/>
    <property type="evidence" value="ECO:0000250"/>
    <property type="project" value="BHF-UCL"/>
</dbReference>
<dbReference type="GO" id="GO:0090200">
    <property type="term" value="P:positive regulation of release of cytochrome c from mitochondria"/>
    <property type="evidence" value="ECO:0000250"/>
    <property type="project" value="BHF-UCL"/>
</dbReference>
<dbReference type="InterPro" id="IPR028192">
    <property type="entry name" value="BMF"/>
</dbReference>
<dbReference type="PANTHER" id="PTHR32014">
    <property type="entry name" value="BCL-2-MODIFYING FACTOR"/>
    <property type="match status" value="1"/>
</dbReference>
<dbReference type="PANTHER" id="PTHR32014:SF2">
    <property type="entry name" value="BCL-2-MODIFYING FACTOR"/>
    <property type="match status" value="1"/>
</dbReference>
<dbReference type="Pfam" id="PF15185">
    <property type="entry name" value="BMF"/>
    <property type="match status" value="1"/>
</dbReference>
<proteinExistence type="evidence at protein level"/>
<keyword id="KW-0002">3D-structure</keyword>
<keyword id="KW-0025">Alternative splicing</keyword>
<keyword id="KW-0053">Apoptosis</keyword>
<keyword id="KW-1267">Proteomics identification</keyword>
<keyword id="KW-1185">Reference proteome</keyword>
<protein>
    <recommendedName>
        <fullName>Bcl-2-modifying factor</fullName>
    </recommendedName>
</protein>
<organism>
    <name type="scientific">Homo sapiens</name>
    <name type="common">Human</name>
    <dbReference type="NCBI Taxonomy" id="9606"/>
    <lineage>
        <taxon>Eukaryota</taxon>
        <taxon>Metazoa</taxon>
        <taxon>Chordata</taxon>
        <taxon>Craniata</taxon>
        <taxon>Vertebrata</taxon>
        <taxon>Euteleostomi</taxon>
        <taxon>Mammalia</taxon>
        <taxon>Eutheria</taxon>
        <taxon>Euarchontoglires</taxon>
        <taxon>Primates</taxon>
        <taxon>Haplorrhini</taxon>
        <taxon>Catarrhini</taxon>
        <taxon>Hominidae</taxon>
        <taxon>Homo</taxon>
    </lineage>
</organism>
<gene>
    <name type="primary">BMF</name>
</gene>
<accession>Q96LC9</accession>
<accession>Q2M396</accession>
<accession>Q6NT30</accession>
<accession>Q6NT56</accession>
<accession>Q6P9F6</accession>
<accession>Q7Z7D4</accession>
<accession>Q7Z7D5</accession>
<accession>Q9H7K7</accession>
<reference key="1">
    <citation type="journal article" date="2001" name="Science">
        <title>Bmf: a proapoptotic BH3-only protein regulated by interaction with the myosin V actin motor complex, activated by anoikis.</title>
        <authorList>
            <person name="Puthalakath H."/>
            <person name="Villunger A."/>
            <person name="O'Reilly L.A."/>
            <person name="Beaumont J.G."/>
            <person name="Coultas L."/>
            <person name="Cheney R.E."/>
            <person name="Huang D.C.S."/>
            <person name="Strasser A."/>
        </authorList>
    </citation>
    <scope>NUCLEOTIDE SEQUENCE [MRNA] (ISOFORM 1)</scope>
    <source>
        <tissue>T-cell</tissue>
    </source>
</reference>
<reference key="2">
    <citation type="journal article" date="2004" name="Leukemia">
        <title>Expression and transcriptional regulation of functionally distinct Bmf isoforms in B-chronic lymphocytic leukemia cells.</title>
        <authorList>
            <person name="Morales A.A."/>
            <person name="Olsson A."/>
            <person name="Celsing F."/>
            <person name="Oesterborg A."/>
            <person name="Jondal M."/>
            <person name="Osorio L.M."/>
        </authorList>
    </citation>
    <scope>NUCLEOTIDE SEQUENCE [MRNA] (ISOFORMS 1; 2 AND 3)</scope>
    <scope>TISSUE SPECIFICITY</scope>
    <source>
        <tissue>B-cell</tissue>
    </source>
</reference>
<reference key="3">
    <citation type="journal article" date="2000" name="DNA Res.">
        <title>Characterization of long cDNA clones from human adult spleen.</title>
        <authorList>
            <person name="Hattori A."/>
            <person name="Okumura K."/>
            <person name="Nagase T."/>
            <person name="Kikuno R."/>
            <person name="Hirosawa M."/>
            <person name="Ohara O."/>
        </authorList>
    </citation>
    <scope>NUCLEOTIDE SEQUENCE [LARGE SCALE MRNA] (ISOFORM 1)</scope>
    <source>
        <tissue>Spleen</tissue>
    </source>
</reference>
<reference key="4">
    <citation type="journal article" date="2004" name="Genome Res.">
        <title>The status, quality, and expansion of the NIH full-length cDNA project: the Mammalian Gene Collection (MGC).</title>
        <authorList>
            <consortium name="The MGC Project Team"/>
        </authorList>
    </citation>
    <scope>NUCLEOTIDE SEQUENCE [LARGE SCALE MRNA] (ISOFORM 1)</scope>
    <source>
        <tissue>Placenta</tissue>
    </source>
</reference>
<comment type="function">
    <text>May play a role in apoptosis. Isoform 1 seems to be the main initiator.</text>
</comment>
<comment type="subunit">
    <text evidence="1">Interacts with MCL1, BCL2, BCL2L1/BCL-Xl, BCL2A1 and BCL2L2/BCL-w. Interacts with the myosin V actin motor complex through its binding to DLC2 (By similarity).</text>
</comment>
<comment type="interaction">
    <interactant intactId="EBI-3919268">
        <id>Q96LC9</id>
    </interactant>
    <interactant intactId="EBI-21535880">
        <id>Q92870-2</id>
        <label>APBB2</label>
    </interactant>
    <organismsDiffer>false</organismsDiffer>
    <experiments>3</experiments>
</comment>
<comment type="interaction">
    <interactant intactId="EBI-3919268">
        <id>Q96LC9</id>
    </interactant>
    <interactant intactId="EBI-745213">
        <id>P29972</id>
        <label>AQP1</label>
    </interactant>
    <organismsDiffer>false</organismsDiffer>
    <experiments>3</experiments>
</comment>
<comment type="interaction">
    <interactant intactId="EBI-3919268">
        <id>Q96LC9</id>
    </interactant>
    <interactant intactId="EBI-16431449">
        <id>A0A0S2Z3D2</id>
        <label>BCL2L1</label>
    </interactant>
    <organismsDiffer>false</organismsDiffer>
    <experiments>3</experiments>
</comment>
<comment type="interaction">
    <interactant intactId="EBI-3919268">
        <id>Q96LC9</id>
    </interactant>
    <interactant intactId="EBI-78035">
        <id>Q07817</id>
        <label>BCL2L1</label>
    </interactant>
    <organismsDiffer>false</organismsDiffer>
    <experiments>12</experiments>
</comment>
<comment type="interaction">
    <interactant intactId="EBI-3919268">
        <id>Q96LC9</id>
    </interactant>
    <interactant intactId="EBI-2126349">
        <id>Q9HD36</id>
        <label>BCL2L10</label>
    </interactant>
    <organismsDiffer>false</organismsDiffer>
    <experiments>3</experiments>
</comment>
<comment type="interaction">
    <interactant intactId="EBI-3919268">
        <id>Q96LC9</id>
    </interactant>
    <interactant intactId="EBI-707714">
        <id>Q92843</id>
        <label>BCL2L2</label>
    </interactant>
    <organismsDiffer>false</organismsDiffer>
    <experiments>13</experiments>
</comment>
<comment type="interaction">
    <interactant intactId="EBI-3919268">
        <id>Q96LC9</id>
    </interactant>
    <interactant intactId="EBI-1188472">
        <id>P78358</id>
        <label>CTAG1B</label>
    </interactant>
    <organismsDiffer>false</organismsDiffer>
    <experiments>3</experiments>
</comment>
<comment type="interaction">
    <interactant intactId="EBI-3919268">
        <id>Q96LC9</id>
    </interactant>
    <interactant intactId="EBI-349105">
        <id>P63167</id>
        <label>DYNLL1</label>
    </interactant>
    <organismsDiffer>false</organismsDiffer>
    <experiments>3</experiments>
</comment>
<comment type="interaction">
    <interactant intactId="EBI-3919268">
        <id>Q96LC9</id>
    </interactant>
    <interactant intactId="EBI-742371">
        <id>Q96FJ2</id>
        <label>DYNLL2</label>
    </interactant>
    <organismsDiffer>false</organismsDiffer>
    <experiments>3</experiments>
</comment>
<comment type="interaction">
    <interactant intactId="EBI-3919268">
        <id>Q96LC9</id>
    </interactant>
    <interactant intactId="EBI-347538">
        <id>Q9Y4H4</id>
        <label>GPSM3</label>
    </interactant>
    <organismsDiffer>false</organismsDiffer>
    <experiments>3</experiments>
</comment>
<comment type="interaction">
    <interactant intactId="EBI-3919268">
        <id>Q96LC9</id>
    </interactant>
    <interactant intactId="EBI-747754">
        <id>P28799</id>
        <label>GRN</label>
    </interactant>
    <organismsDiffer>false</organismsDiffer>
    <experiments>3</experiments>
</comment>
<comment type="interaction">
    <interactant intactId="EBI-3919268">
        <id>Q96LC9</id>
    </interactant>
    <interactant intactId="EBI-352682">
        <id>P04792</id>
        <label>HSPB1</label>
    </interactant>
    <organismsDiffer>false</organismsDiffer>
    <experiments>3</experiments>
</comment>
<comment type="interaction">
    <interactant intactId="EBI-3919268">
        <id>Q96LC9</id>
    </interactant>
    <interactant intactId="EBI-10975473">
        <id>O60333-2</id>
        <label>KIF1B</label>
    </interactant>
    <organismsDiffer>false</organismsDiffer>
    <experiments>3</experiments>
</comment>
<comment type="interaction">
    <interactant intactId="EBI-3919268">
        <id>Q96LC9</id>
    </interactant>
    <interactant intactId="EBI-948266">
        <id>O14901</id>
        <label>KLF11</label>
    </interactant>
    <organismsDiffer>false</organismsDiffer>
    <experiments>3</experiments>
</comment>
<comment type="interaction">
    <interactant intactId="EBI-3919268">
        <id>Q96LC9</id>
    </interactant>
    <interactant intactId="EBI-11911016">
        <id>P80188</id>
        <label>LCN2</label>
    </interactant>
    <organismsDiffer>false</organismsDiffer>
    <experiments>3</experiments>
</comment>
<comment type="interaction">
    <interactant intactId="EBI-3919268">
        <id>Q96LC9</id>
    </interactant>
    <interactant intactId="EBI-1003422">
        <id>Q07820</id>
        <label>MCL1</label>
    </interactant>
    <organismsDiffer>false</organismsDiffer>
    <experiments>3</experiments>
</comment>
<comment type="interaction">
    <interactant intactId="EBI-3919268">
        <id>Q96LC9</id>
    </interactant>
    <interactant intactId="EBI-752057">
        <id>Q7Z412</id>
        <label>PEX26</label>
    </interactant>
    <organismsDiffer>false</organismsDiffer>
    <experiments>3</experiments>
</comment>
<comment type="interaction">
    <interactant intactId="EBI-3919268">
        <id>Q96LC9</id>
    </interactant>
    <interactant intactId="EBI-10253121">
        <id>Q6P9E2</id>
        <label>RECK</label>
    </interactant>
    <organismsDiffer>false</organismsDiffer>
    <experiments>3</experiments>
</comment>
<comment type="interaction">
    <interactant intactId="EBI-3919268">
        <id>Q96LC9</id>
    </interactant>
    <interactant intactId="EBI-307352">
        <id>Q04864</id>
        <label>REL</label>
    </interactant>
    <organismsDiffer>false</organismsDiffer>
    <experiments>3</experiments>
</comment>
<comment type="interaction">
    <interactant intactId="EBI-3919268">
        <id>Q96LC9</id>
    </interactant>
    <interactant intactId="EBI-10320311">
        <id>Q9UDX3</id>
        <label>SEC14L4</label>
    </interactant>
    <organismsDiffer>false</organismsDiffer>
    <experiments>3</experiments>
</comment>
<comment type="interaction">
    <interactant intactId="EBI-3919268">
        <id>Q96LC9</id>
    </interactant>
    <interactant intactId="EBI-79084">
        <id>Q92529</id>
        <label>SHC3</label>
    </interactant>
    <organismsDiffer>false</organismsDiffer>
    <experiments>3</experiments>
</comment>
<comment type="interaction">
    <interactant intactId="EBI-3919268">
        <id>Q96LC9</id>
    </interactant>
    <interactant intactId="EBI-1105213">
        <id>Q9UBB9</id>
        <label>TFIP11</label>
    </interactant>
    <organismsDiffer>false</organismsDiffer>
    <experiments>7</experiments>
</comment>
<comment type="interaction">
    <interactant intactId="EBI-3919268">
        <id>Q96LC9</id>
    </interactant>
    <interactant intactId="EBI-720609">
        <id>O76024</id>
        <label>WFS1</label>
    </interactant>
    <organismsDiffer>false</organismsDiffer>
    <experiments>3</experiments>
</comment>
<comment type="alternative products">
    <event type="alternative splicing"/>
    <isoform>
        <id>Q96LC9-1</id>
        <name>1</name>
        <name>BMF-I</name>
        <sequence type="displayed"/>
    </isoform>
    <isoform>
        <id>Q96LC9-2</id>
        <name>2</name>
        <name>BMF-II</name>
        <sequence type="described" ref="VSP_012292"/>
    </isoform>
    <isoform>
        <id>Q96LC9-3</id>
        <name>3</name>
        <name>BMF-III</name>
        <sequence type="described" ref="VSP_012293 VSP_012294"/>
    </isoform>
</comment>
<comment type="tissue specificity">
    <text evidence="2">Isoform 1 is mainly expressed in B-lymphoid cells. Isoform 2 and isoform 3 are mainly expressed in B-CLL and normal B-cells.</text>
</comment>
<comment type="similarity">
    <text evidence="4">Belongs to the Bcl-2 family.</text>
</comment>
<comment type="sequence caution" evidence="4">
    <conflict type="erroneous initiation">
        <sequence resource="EMBL-CDS" id="AAH60783"/>
    </conflict>
</comment>
<comment type="sequence caution" evidence="4">
    <conflict type="erroneous initiation">
        <sequence resource="EMBL-CDS" id="BAB15762"/>
    </conflict>
</comment>
<feature type="chain" id="PRO_0000143111" description="Bcl-2-modifying factor">
    <location>
        <begin position="1"/>
        <end position="184"/>
    </location>
</feature>
<feature type="region of interest" description="Interaction with DLC2" evidence="1">
    <location>
        <begin position="67"/>
        <end position="75"/>
    </location>
</feature>
<feature type="short sequence motif" description="BH3">
    <location>
        <begin position="133"/>
        <end position="147"/>
    </location>
</feature>
<feature type="splice variant" id="VSP_012293" description="In isoform 3." evidence="3">
    <original>GNAGYRLPLPASFPAVLPIGEQPPEGQWQHQA</original>
    <variation>APAEPKSCVVADPPLPAQPCFEWRREQERGRP</variation>
    <location>
        <begin position="98"/>
        <end position="129"/>
    </location>
</feature>
<feature type="splice variant" id="VSP_012294" description="In isoform 3." evidence="3">
    <location>
        <begin position="130"/>
        <end position="184"/>
    </location>
</feature>
<feature type="splice variant" id="VSP_012292" description="In isoform 2." evidence="3">
    <location>
        <begin position="131"/>
        <end position="151"/>
    </location>
</feature>
<feature type="sequence conflict" description="In Ref. 4; AAH69328." evidence="4" ref="4">
    <original>R</original>
    <variation>Q</variation>
    <location>
        <position position="61"/>
    </location>
</feature>
<feature type="sequence conflict" description="In Ref. 4; AAH69505." evidence="4" ref="4">
    <original>Q</original>
    <variation>P</variation>
    <location>
        <position position="80"/>
    </location>
</feature>
<feature type="strand" evidence="5">
    <location>
        <begin position="66"/>
        <end position="71"/>
    </location>
</feature>
<feature type="helix" evidence="6">
    <location>
        <begin position="130"/>
        <end position="142"/>
    </location>
</feature>
<name>BMF_HUMAN</name>